<name>F16P2_BETVU</name>
<feature type="chain" id="PRO_0000200513" description="Fructose-1,6-bisphosphatase, cytosolic">
    <location>
        <begin position="1"/>
        <end position="341"/>
    </location>
</feature>
<feature type="binding site" evidence="1">
    <location>
        <position position="71"/>
    </location>
    <ligand>
        <name>Mg(2+)</name>
        <dbReference type="ChEBI" id="CHEBI:18420"/>
        <label>1</label>
    </ligand>
</feature>
<feature type="binding site" evidence="1">
    <location>
        <position position="100"/>
    </location>
    <ligand>
        <name>Mg(2+)</name>
        <dbReference type="ChEBI" id="CHEBI:18420"/>
        <label>1</label>
    </ligand>
</feature>
<feature type="binding site" evidence="1">
    <location>
        <position position="100"/>
    </location>
    <ligand>
        <name>Mg(2+)</name>
        <dbReference type="ChEBI" id="CHEBI:18420"/>
        <label>2</label>
    </ligand>
</feature>
<feature type="binding site" evidence="1">
    <location>
        <position position="121"/>
    </location>
    <ligand>
        <name>Mg(2+)</name>
        <dbReference type="ChEBI" id="CHEBI:18420"/>
        <label>2</label>
    </ligand>
</feature>
<feature type="binding site" evidence="1">
    <location>
        <position position="121"/>
    </location>
    <ligand>
        <name>Mg(2+)</name>
        <dbReference type="ChEBI" id="CHEBI:18420"/>
        <label>3</label>
    </ligand>
</feature>
<feature type="binding site" evidence="1">
    <location>
        <position position="123"/>
    </location>
    <ligand>
        <name>Mg(2+)</name>
        <dbReference type="ChEBI" id="CHEBI:18420"/>
        <label>2</label>
    </ligand>
</feature>
<feature type="binding site" evidence="1">
    <location>
        <begin position="124"/>
        <end position="127"/>
    </location>
    <ligand>
        <name>substrate</name>
    </ligand>
</feature>
<feature type="binding site" evidence="1">
    <location>
        <position position="124"/>
    </location>
    <ligand>
        <name>Mg(2+)</name>
        <dbReference type="ChEBI" id="CHEBI:18420"/>
        <label>3</label>
    </ligand>
</feature>
<feature type="binding site" evidence="1">
    <location>
        <position position="215"/>
    </location>
    <ligand>
        <name>substrate</name>
    </ligand>
</feature>
<feature type="binding site" evidence="1">
    <location>
        <position position="247"/>
    </location>
    <ligand>
        <name>substrate</name>
    </ligand>
</feature>
<feature type="binding site" evidence="1">
    <location>
        <position position="267"/>
    </location>
    <ligand>
        <name>substrate</name>
    </ligand>
</feature>
<feature type="binding site" evidence="1">
    <location>
        <position position="277"/>
    </location>
    <ligand>
        <name>substrate</name>
    </ligand>
</feature>
<feature type="binding site" evidence="1">
    <location>
        <position position="283"/>
    </location>
    <ligand>
        <name>Mg(2+)</name>
        <dbReference type="ChEBI" id="CHEBI:18420"/>
        <label>3</label>
    </ligand>
</feature>
<dbReference type="EC" id="3.1.3.11"/>
<dbReference type="EMBL" id="M80597">
    <property type="protein sequence ID" value="AAA32915.1"/>
    <property type="status" value="ALT_SEQ"/>
    <property type="molecule type" value="mRNA"/>
</dbReference>
<dbReference type="EMBL" id="AF317553">
    <property type="protein sequence ID" value="AAG31813.1"/>
    <property type="molecule type" value="mRNA"/>
</dbReference>
<dbReference type="SMR" id="Q42649"/>
<dbReference type="GO" id="GO:0005829">
    <property type="term" value="C:cytosol"/>
    <property type="evidence" value="ECO:0007669"/>
    <property type="project" value="TreeGrafter"/>
</dbReference>
<dbReference type="GO" id="GO:0042132">
    <property type="term" value="F:fructose 1,6-bisphosphate 1-phosphatase activity"/>
    <property type="evidence" value="ECO:0007669"/>
    <property type="project" value="UniProtKB-EC"/>
</dbReference>
<dbReference type="GO" id="GO:0046872">
    <property type="term" value="F:metal ion binding"/>
    <property type="evidence" value="ECO:0007669"/>
    <property type="project" value="UniProtKB-KW"/>
</dbReference>
<dbReference type="GO" id="GO:0030388">
    <property type="term" value="P:fructose 1,6-bisphosphate metabolic process"/>
    <property type="evidence" value="ECO:0007669"/>
    <property type="project" value="TreeGrafter"/>
</dbReference>
<dbReference type="GO" id="GO:0006002">
    <property type="term" value="P:fructose 6-phosphate metabolic process"/>
    <property type="evidence" value="ECO:0007669"/>
    <property type="project" value="TreeGrafter"/>
</dbReference>
<dbReference type="GO" id="GO:0006000">
    <property type="term" value="P:fructose metabolic process"/>
    <property type="evidence" value="ECO:0007669"/>
    <property type="project" value="TreeGrafter"/>
</dbReference>
<dbReference type="GO" id="GO:0006094">
    <property type="term" value="P:gluconeogenesis"/>
    <property type="evidence" value="ECO:0007669"/>
    <property type="project" value="TreeGrafter"/>
</dbReference>
<dbReference type="GO" id="GO:0005986">
    <property type="term" value="P:sucrose biosynthetic process"/>
    <property type="evidence" value="ECO:0007669"/>
    <property type="project" value="TreeGrafter"/>
</dbReference>
<dbReference type="CDD" id="cd00354">
    <property type="entry name" value="FBPase"/>
    <property type="match status" value="1"/>
</dbReference>
<dbReference type="FunFam" id="3.40.190.80:FF:000001">
    <property type="entry name" value="Fructose-1,6-bisphosphatase class 1"/>
    <property type="match status" value="1"/>
</dbReference>
<dbReference type="FunFam" id="3.30.540.10:FF:000008">
    <property type="entry name" value="Fructose-1,6-bisphosphatase, cytosolic"/>
    <property type="match status" value="1"/>
</dbReference>
<dbReference type="Gene3D" id="3.40.190.80">
    <property type="match status" value="1"/>
</dbReference>
<dbReference type="Gene3D" id="3.30.540.10">
    <property type="entry name" value="Fructose-1,6-Bisphosphatase, subunit A, domain 1"/>
    <property type="match status" value="1"/>
</dbReference>
<dbReference type="HAMAP" id="MF_01855">
    <property type="entry name" value="FBPase_class1"/>
    <property type="match status" value="1"/>
</dbReference>
<dbReference type="InterPro" id="IPR044015">
    <property type="entry name" value="FBPase_C_dom"/>
</dbReference>
<dbReference type="InterPro" id="IPR000146">
    <property type="entry name" value="FBPase_class-1"/>
</dbReference>
<dbReference type="InterPro" id="IPR033391">
    <property type="entry name" value="FBPase_N"/>
</dbReference>
<dbReference type="InterPro" id="IPR028343">
    <property type="entry name" value="FBPtase"/>
</dbReference>
<dbReference type="InterPro" id="IPR020548">
    <property type="entry name" value="Fructose_bisphosphatase_AS"/>
</dbReference>
<dbReference type="NCBIfam" id="NF006778">
    <property type="entry name" value="PRK09293.1-1"/>
    <property type="match status" value="1"/>
</dbReference>
<dbReference type="PANTHER" id="PTHR11556:SF41">
    <property type="entry name" value="FRUCTOSE-1,6-BISPHOSPHATASE, CYTOSOLIC"/>
    <property type="match status" value="1"/>
</dbReference>
<dbReference type="PANTHER" id="PTHR11556">
    <property type="entry name" value="FRUCTOSE-1,6-BISPHOSPHATASE-RELATED"/>
    <property type="match status" value="1"/>
</dbReference>
<dbReference type="Pfam" id="PF00316">
    <property type="entry name" value="FBPase"/>
    <property type="match status" value="1"/>
</dbReference>
<dbReference type="Pfam" id="PF18913">
    <property type="entry name" value="FBPase_C"/>
    <property type="match status" value="1"/>
</dbReference>
<dbReference type="PIRSF" id="PIRSF500210">
    <property type="entry name" value="FBPtase"/>
    <property type="match status" value="1"/>
</dbReference>
<dbReference type="PIRSF" id="PIRSF000904">
    <property type="entry name" value="FBPtase_SBPase"/>
    <property type="match status" value="1"/>
</dbReference>
<dbReference type="PRINTS" id="PR00115">
    <property type="entry name" value="F16BPHPHTASE"/>
</dbReference>
<dbReference type="SUPFAM" id="SSF56655">
    <property type="entry name" value="Carbohydrate phosphatase"/>
    <property type="match status" value="1"/>
</dbReference>
<dbReference type="PROSITE" id="PS00124">
    <property type="entry name" value="FBPASE"/>
    <property type="match status" value="1"/>
</dbReference>
<accession>Q42649</accession>
<accession>Q9FUA5</accession>
<sequence length="341" mass="37247">MDHAADATRTDLMTITRFVLNEQSKRPESRGDFTILMSHIVLGCKFVCSAVNKAGLAKLIGLAGETNIQGEEQKKLDVLSNEVFIKALISSGRTCILVSEEDEEATFVEPSLRGKYCVVFDPLDGCSNIDCGVSIGTIFGIYMVKDLNNATLDDVLQPGKNMVAAGYCMYGSSCTLVMSTGSGVNGFTHDPSLGEFILTHPDIKIPKKGKIYSVNEGNAKNWDGPTTKYVEKCKFPKDGSSPKSLRYIGSMVADVHRTLLYGGIFMYPGDKKSPNGKLRVLYEVFPMSFLMEQAGGQAFTGEQRALDLVPKNIHDRSPVFLGSYDDVEDIKALYAAEQKNA</sequence>
<evidence type="ECO:0000250" key="1"/>
<evidence type="ECO:0000305" key="2"/>
<comment type="catalytic activity">
    <reaction>
        <text>beta-D-fructose 1,6-bisphosphate + H2O = beta-D-fructose 6-phosphate + phosphate</text>
        <dbReference type="Rhea" id="RHEA:11064"/>
        <dbReference type="ChEBI" id="CHEBI:15377"/>
        <dbReference type="ChEBI" id="CHEBI:32966"/>
        <dbReference type="ChEBI" id="CHEBI:43474"/>
        <dbReference type="ChEBI" id="CHEBI:57634"/>
        <dbReference type="EC" id="3.1.3.11"/>
    </reaction>
</comment>
<comment type="cofactor">
    <cofactor evidence="1">
        <name>Mg(2+)</name>
        <dbReference type="ChEBI" id="CHEBI:18420"/>
    </cofactor>
    <text evidence="1">Binds 3 Mg(2+) ions per subunit.</text>
</comment>
<comment type="subcellular location">
    <subcellularLocation>
        <location>Cytoplasm</location>
    </subcellularLocation>
</comment>
<comment type="miscellaneous">
    <text>In plants there are two FBPase isozymes: one in the cytosol and the other in the chloroplast.</text>
</comment>
<comment type="similarity">
    <text evidence="2">Belongs to the FBPase class 1 family.</text>
</comment>
<comment type="sequence caution" evidence="2">
    <conflict type="frameshift">
        <sequence resource="EMBL-CDS" id="AAA32915"/>
    </conflict>
</comment>
<protein>
    <recommendedName>
        <fullName>Fructose-1,6-bisphosphatase, cytosolic</fullName>
        <shortName>FBPase</shortName>
        <ecNumber>3.1.3.11</ecNumber>
    </recommendedName>
    <alternativeName>
        <fullName>D-fructose-1,6-bisphosphate 1-phosphohydrolase</fullName>
    </alternativeName>
</protein>
<organism>
    <name type="scientific">Beta vulgaris</name>
    <name type="common">Sugar beet</name>
    <dbReference type="NCBI Taxonomy" id="161934"/>
    <lineage>
        <taxon>Eukaryota</taxon>
        <taxon>Viridiplantae</taxon>
        <taxon>Streptophyta</taxon>
        <taxon>Embryophyta</taxon>
        <taxon>Tracheophyta</taxon>
        <taxon>Spermatophyta</taxon>
        <taxon>Magnoliopsida</taxon>
        <taxon>eudicotyledons</taxon>
        <taxon>Gunneridae</taxon>
        <taxon>Pentapetalae</taxon>
        <taxon>Caryophyllales</taxon>
        <taxon>Chenopodiaceae</taxon>
        <taxon>Betoideae</taxon>
        <taxon>Beta</taxon>
    </lineage>
</organism>
<proteinExistence type="evidence at transcript level"/>
<reference key="1">
    <citation type="submission" date="1992-03" db="EMBL/GenBank/DDBJ databases">
        <title>Cloning and nucleotide sequence of a cDNA encoding the cytosolic fructose-1,6-bisphosphatases of sugarbeet (Beta Vulgaris L.).</title>
        <authorList>
            <person name="Harn C.H."/>
            <person name="Daie J."/>
        </authorList>
    </citation>
    <scope>NUCLEOTIDE SEQUENCE [MRNA]</scope>
    <source>
        <tissue>Leaf</tissue>
    </source>
</reference>
<reference key="2">
    <citation type="journal article" date="1992" name="Plant Physiol.">
        <title>Cloning and nucleotide sequence of a complementary DNA encoding the cytosolic fructose-1,6-bisphosphatase of sugar beet (Beta vulgaris L.).</title>
        <authorList>
            <person name="Harn C.H."/>
            <person name="Daie J."/>
        </authorList>
    </citation>
    <scope>NUCLEOTIDE SEQUENCE [MRNA]</scope>
</reference>
<keyword id="KW-0119">Carbohydrate metabolism</keyword>
<keyword id="KW-0963">Cytoplasm</keyword>
<keyword id="KW-0378">Hydrolase</keyword>
<keyword id="KW-0460">Magnesium</keyword>
<keyword id="KW-0479">Metal-binding</keyword>